<accession>A8MFG6</accession>
<dbReference type="EMBL" id="CP000853">
    <property type="protein sequence ID" value="ABW19129.1"/>
    <property type="molecule type" value="Genomic_DNA"/>
</dbReference>
<dbReference type="RefSeq" id="WP_012159441.1">
    <property type="nucleotide sequence ID" value="NC_009922.1"/>
</dbReference>
<dbReference type="SMR" id="A8MFG6"/>
<dbReference type="STRING" id="350688.Clos_1586"/>
<dbReference type="KEGG" id="aoe:Clos_1586"/>
<dbReference type="eggNOG" id="COG1386">
    <property type="taxonomic scope" value="Bacteria"/>
</dbReference>
<dbReference type="HOGENOM" id="CLU_045647_5_3_9"/>
<dbReference type="OrthoDB" id="9806226at2"/>
<dbReference type="Proteomes" id="UP000000269">
    <property type="component" value="Chromosome"/>
</dbReference>
<dbReference type="GO" id="GO:0005737">
    <property type="term" value="C:cytoplasm"/>
    <property type="evidence" value="ECO:0007669"/>
    <property type="project" value="UniProtKB-SubCell"/>
</dbReference>
<dbReference type="GO" id="GO:0051301">
    <property type="term" value="P:cell division"/>
    <property type="evidence" value="ECO:0007669"/>
    <property type="project" value="UniProtKB-KW"/>
</dbReference>
<dbReference type="GO" id="GO:0051304">
    <property type="term" value="P:chromosome separation"/>
    <property type="evidence" value="ECO:0007669"/>
    <property type="project" value="InterPro"/>
</dbReference>
<dbReference type="GO" id="GO:0006260">
    <property type="term" value="P:DNA replication"/>
    <property type="evidence" value="ECO:0007669"/>
    <property type="project" value="UniProtKB-UniRule"/>
</dbReference>
<dbReference type="Gene3D" id="1.10.10.10">
    <property type="entry name" value="Winged helix-like DNA-binding domain superfamily/Winged helix DNA-binding domain"/>
    <property type="match status" value="2"/>
</dbReference>
<dbReference type="HAMAP" id="MF_01804">
    <property type="entry name" value="ScpB"/>
    <property type="match status" value="1"/>
</dbReference>
<dbReference type="InterPro" id="IPR005234">
    <property type="entry name" value="ScpB_csome_segregation"/>
</dbReference>
<dbReference type="InterPro" id="IPR036388">
    <property type="entry name" value="WH-like_DNA-bd_sf"/>
</dbReference>
<dbReference type="InterPro" id="IPR036390">
    <property type="entry name" value="WH_DNA-bd_sf"/>
</dbReference>
<dbReference type="NCBIfam" id="TIGR00281">
    <property type="entry name" value="SMC-Scp complex subunit ScpB"/>
    <property type="match status" value="1"/>
</dbReference>
<dbReference type="PANTHER" id="PTHR34298">
    <property type="entry name" value="SEGREGATION AND CONDENSATION PROTEIN B"/>
    <property type="match status" value="1"/>
</dbReference>
<dbReference type="PANTHER" id="PTHR34298:SF2">
    <property type="entry name" value="SEGREGATION AND CONDENSATION PROTEIN B"/>
    <property type="match status" value="1"/>
</dbReference>
<dbReference type="Pfam" id="PF04079">
    <property type="entry name" value="SMC_ScpB"/>
    <property type="match status" value="1"/>
</dbReference>
<dbReference type="PIRSF" id="PIRSF019345">
    <property type="entry name" value="ScpB"/>
    <property type="match status" value="1"/>
</dbReference>
<dbReference type="SUPFAM" id="SSF46785">
    <property type="entry name" value="Winged helix' DNA-binding domain"/>
    <property type="match status" value="2"/>
</dbReference>
<organism>
    <name type="scientific">Alkaliphilus oremlandii (strain OhILAs)</name>
    <name type="common">Clostridium oremlandii (strain OhILAs)</name>
    <dbReference type="NCBI Taxonomy" id="350688"/>
    <lineage>
        <taxon>Bacteria</taxon>
        <taxon>Bacillati</taxon>
        <taxon>Bacillota</taxon>
        <taxon>Clostridia</taxon>
        <taxon>Peptostreptococcales</taxon>
        <taxon>Natronincolaceae</taxon>
        <taxon>Alkaliphilus</taxon>
    </lineage>
</organism>
<gene>
    <name evidence="1" type="primary">scpB</name>
    <name type="ordered locus">Clos_1586</name>
</gene>
<reference key="1">
    <citation type="submission" date="2007-10" db="EMBL/GenBank/DDBJ databases">
        <title>Complete genome of Alkaliphilus oremlandii OhILAs.</title>
        <authorList>
            <person name="Copeland A."/>
            <person name="Lucas S."/>
            <person name="Lapidus A."/>
            <person name="Barry K."/>
            <person name="Detter J.C."/>
            <person name="Glavina del Rio T."/>
            <person name="Hammon N."/>
            <person name="Israni S."/>
            <person name="Dalin E."/>
            <person name="Tice H."/>
            <person name="Pitluck S."/>
            <person name="Chain P."/>
            <person name="Malfatti S."/>
            <person name="Shin M."/>
            <person name="Vergez L."/>
            <person name="Schmutz J."/>
            <person name="Larimer F."/>
            <person name="Land M."/>
            <person name="Hauser L."/>
            <person name="Kyrpides N."/>
            <person name="Mikhailova N."/>
            <person name="Stolz J.F."/>
            <person name="Dawson A."/>
            <person name="Fisher E."/>
            <person name="Crable B."/>
            <person name="Perera E."/>
            <person name="Lisak J."/>
            <person name="Ranganathan M."/>
            <person name="Basu P."/>
            <person name="Richardson P."/>
        </authorList>
    </citation>
    <scope>NUCLEOTIDE SEQUENCE [LARGE SCALE GENOMIC DNA]</scope>
    <source>
        <strain>OhILAs</strain>
    </source>
</reference>
<keyword id="KW-0131">Cell cycle</keyword>
<keyword id="KW-0132">Cell division</keyword>
<keyword id="KW-0159">Chromosome partition</keyword>
<keyword id="KW-0963">Cytoplasm</keyword>
<keyword id="KW-1185">Reference proteome</keyword>
<comment type="function">
    <text evidence="1">Participates in chromosomal partition during cell division. May act via the formation of a condensin-like complex containing Smc and ScpA that pull DNA away from mid-cell into both cell halves.</text>
</comment>
<comment type="subunit">
    <text evidence="1">Homodimer. Homodimerization may be required to stabilize the binding of ScpA to the Smc head domains. Component of a cohesin-like complex composed of ScpA, ScpB and the Smc homodimer, in which ScpA and ScpB bind to the head domain of Smc. The presence of the three proteins is required for the association of the complex with DNA.</text>
</comment>
<comment type="subcellular location">
    <subcellularLocation>
        <location evidence="1">Cytoplasm</location>
    </subcellularLocation>
    <text evidence="1">Associated with two foci at the outer edges of the nucleoid region in young cells, and at four foci within both cell halves in older cells.</text>
</comment>
<comment type="similarity">
    <text evidence="1">Belongs to the ScpB family.</text>
</comment>
<protein>
    <recommendedName>
        <fullName evidence="1">Segregation and condensation protein B</fullName>
    </recommendedName>
</protein>
<sequence>MDRDEIKSAIEAILFAWSDPLSIKDLSEVLDIGTKEIEGVLAEMINEFNYSKRGIQIIKMNDYYQLSTRPEHYEYLQKLFAPKQNRGITQAALETLAIIAYKQPITKTEIEEIRGVKCDKAISTLLEKELIEEQGRLEKTGRPIIYGTTINFLKVFSISSLDNLPNVSDFNISVDSDILKDIYEK</sequence>
<name>SCPB_ALKOO</name>
<proteinExistence type="inferred from homology"/>
<evidence type="ECO:0000255" key="1">
    <source>
        <dbReference type="HAMAP-Rule" id="MF_01804"/>
    </source>
</evidence>
<feature type="chain" id="PRO_1000069947" description="Segregation and condensation protein B">
    <location>
        <begin position="1"/>
        <end position="185"/>
    </location>
</feature>